<accession>Q8G1P8</accession>
<accession>G0K805</accession>
<sequence length="247" mass="27669">MEWRDEGVILGTRRHGETSAIVEVMTCGHGRHMGMVRGGRSRRMQPLLQPGNHVDVSWWARLDEHMGTFTIEPLSFAAARLIETPVALYGIQLAAAHLRLLPERDPHRGLYETLRLIIEHFDDPLAAGELLLRFEVMMLEELGFGLDLKECAATGRKDDLIYVSPKSGRAVCREAGAPWAEKLLSLPSFVNDTALRASCYDDLDRAFTMTGYFLMRHVWEPRAQTPPDSRSGFLNAVGRAINLSQAS</sequence>
<proteinExistence type="inferred from homology"/>
<organism>
    <name type="scientific">Brucella suis biovar 1 (strain 1330)</name>
    <dbReference type="NCBI Taxonomy" id="204722"/>
    <lineage>
        <taxon>Bacteria</taxon>
        <taxon>Pseudomonadati</taxon>
        <taxon>Pseudomonadota</taxon>
        <taxon>Alphaproteobacteria</taxon>
        <taxon>Hyphomicrobiales</taxon>
        <taxon>Brucellaceae</taxon>
        <taxon>Brucella/Ochrobactrum group</taxon>
        <taxon>Brucella</taxon>
    </lineage>
</organism>
<protein>
    <recommendedName>
        <fullName evidence="1">DNA repair protein RecO</fullName>
    </recommendedName>
    <alternativeName>
        <fullName evidence="1">Recombination protein O</fullName>
    </alternativeName>
</protein>
<comment type="function">
    <text evidence="1">Involved in DNA repair and RecF pathway recombination.</text>
</comment>
<comment type="similarity">
    <text evidence="1">Belongs to the RecO family.</text>
</comment>
<dbReference type="EMBL" id="AE014291">
    <property type="protein sequence ID" value="AAN29593.1"/>
    <property type="molecule type" value="Genomic_DNA"/>
</dbReference>
<dbReference type="EMBL" id="CP002997">
    <property type="protein sequence ID" value="AEM18010.1"/>
    <property type="molecule type" value="Genomic_DNA"/>
</dbReference>
<dbReference type="RefSeq" id="WP_002963807.1">
    <property type="nucleotide sequence ID" value="NZ_KN046804.1"/>
</dbReference>
<dbReference type="SMR" id="Q8G1P8"/>
<dbReference type="GeneID" id="93016931"/>
<dbReference type="KEGG" id="bms:BR0664"/>
<dbReference type="KEGG" id="bsi:BS1330_I0660"/>
<dbReference type="PATRIC" id="fig|204722.21.peg.1514"/>
<dbReference type="HOGENOM" id="CLU_086029_0_0_5"/>
<dbReference type="PhylomeDB" id="Q8G1P8"/>
<dbReference type="Proteomes" id="UP000007104">
    <property type="component" value="Chromosome I"/>
</dbReference>
<dbReference type="GO" id="GO:0043590">
    <property type="term" value="C:bacterial nucleoid"/>
    <property type="evidence" value="ECO:0007669"/>
    <property type="project" value="TreeGrafter"/>
</dbReference>
<dbReference type="GO" id="GO:0006310">
    <property type="term" value="P:DNA recombination"/>
    <property type="evidence" value="ECO:0007669"/>
    <property type="project" value="UniProtKB-UniRule"/>
</dbReference>
<dbReference type="GO" id="GO:0006302">
    <property type="term" value="P:double-strand break repair"/>
    <property type="evidence" value="ECO:0007669"/>
    <property type="project" value="TreeGrafter"/>
</dbReference>
<dbReference type="Gene3D" id="2.40.50.140">
    <property type="entry name" value="Nucleic acid-binding proteins"/>
    <property type="match status" value="1"/>
</dbReference>
<dbReference type="Gene3D" id="1.20.1440.120">
    <property type="entry name" value="Recombination protein O, C-terminal domain"/>
    <property type="match status" value="1"/>
</dbReference>
<dbReference type="HAMAP" id="MF_00201">
    <property type="entry name" value="RecO"/>
    <property type="match status" value="1"/>
</dbReference>
<dbReference type="InterPro" id="IPR037278">
    <property type="entry name" value="ARFGAP/RecO"/>
</dbReference>
<dbReference type="InterPro" id="IPR022572">
    <property type="entry name" value="DNA_rep/recomb_RecO_N"/>
</dbReference>
<dbReference type="InterPro" id="IPR012340">
    <property type="entry name" value="NA-bd_OB-fold"/>
</dbReference>
<dbReference type="InterPro" id="IPR003717">
    <property type="entry name" value="RecO"/>
</dbReference>
<dbReference type="InterPro" id="IPR042242">
    <property type="entry name" value="RecO_C"/>
</dbReference>
<dbReference type="NCBIfam" id="TIGR00613">
    <property type="entry name" value="reco"/>
    <property type="match status" value="1"/>
</dbReference>
<dbReference type="PANTHER" id="PTHR33991">
    <property type="entry name" value="DNA REPAIR PROTEIN RECO"/>
    <property type="match status" value="1"/>
</dbReference>
<dbReference type="PANTHER" id="PTHR33991:SF1">
    <property type="entry name" value="DNA REPAIR PROTEIN RECO"/>
    <property type="match status" value="1"/>
</dbReference>
<dbReference type="Pfam" id="PF02565">
    <property type="entry name" value="RecO_C"/>
    <property type="match status" value="1"/>
</dbReference>
<dbReference type="Pfam" id="PF11967">
    <property type="entry name" value="RecO_N"/>
    <property type="match status" value="1"/>
</dbReference>
<dbReference type="SUPFAM" id="SSF57863">
    <property type="entry name" value="ArfGap/RecO-like zinc finger"/>
    <property type="match status" value="1"/>
</dbReference>
<dbReference type="SUPFAM" id="SSF50249">
    <property type="entry name" value="Nucleic acid-binding proteins"/>
    <property type="match status" value="1"/>
</dbReference>
<evidence type="ECO:0000255" key="1">
    <source>
        <dbReference type="HAMAP-Rule" id="MF_00201"/>
    </source>
</evidence>
<gene>
    <name evidence="1" type="primary">recO</name>
    <name type="ordered locus">BR0664</name>
    <name type="ordered locus">BS1330_I0660</name>
</gene>
<name>RECO_BRUSU</name>
<keyword id="KW-0227">DNA damage</keyword>
<keyword id="KW-0233">DNA recombination</keyword>
<keyword id="KW-0234">DNA repair</keyword>
<reference key="1">
    <citation type="journal article" date="2002" name="Proc. Natl. Acad. Sci. U.S.A.">
        <title>The Brucella suis genome reveals fundamental similarities between animal and plant pathogens and symbionts.</title>
        <authorList>
            <person name="Paulsen I.T."/>
            <person name="Seshadri R."/>
            <person name="Nelson K.E."/>
            <person name="Eisen J.A."/>
            <person name="Heidelberg J.F."/>
            <person name="Read T.D."/>
            <person name="Dodson R.J."/>
            <person name="Umayam L.A."/>
            <person name="Brinkac L.M."/>
            <person name="Beanan M.J."/>
            <person name="Daugherty S.C."/>
            <person name="DeBoy R.T."/>
            <person name="Durkin A.S."/>
            <person name="Kolonay J.F."/>
            <person name="Madupu R."/>
            <person name="Nelson W.C."/>
            <person name="Ayodeji B."/>
            <person name="Kraul M."/>
            <person name="Shetty J."/>
            <person name="Malek J.A."/>
            <person name="Van Aken S.E."/>
            <person name="Riedmuller S."/>
            <person name="Tettelin H."/>
            <person name="Gill S.R."/>
            <person name="White O."/>
            <person name="Salzberg S.L."/>
            <person name="Hoover D.L."/>
            <person name="Lindler L.E."/>
            <person name="Halling S.M."/>
            <person name="Boyle S.M."/>
            <person name="Fraser C.M."/>
        </authorList>
    </citation>
    <scope>NUCLEOTIDE SEQUENCE [LARGE SCALE GENOMIC DNA]</scope>
    <source>
        <strain>1330</strain>
    </source>
</reference>
<reference key="2">
    <citation type="journal article" date="2011" name="J. Bacteriol.">
        <title>Revised genome sequence of Brucella suis 1330.</title>
        <authorList>
            <person name="Tae H."/>
            <person name="Shallom S."/>
            <person name="Settlage R."/>
            <person name="Preston D."/>
            <person name="Adams L.G."/>
            <person name="Garner H.R."/>
        </authorList>
    </citation>
    <scope>NUCLEOTIDE SEQUENCE [LARGE SCALE GENOMIC DNA]</scope>
    <source>
        <strain>1330</strain>
    </source>
</reference>
<feature type="chain" id="PRO_0000204938" description="DNA repair protein RecO">
    <location>
        <begin position="1"/>
        <end position="247"/>
    </location>
</feature>